<reference key="1">
    <citation type="journal article" date="1992" name="Virology">
        <title>Human papillomavirus type 42: new sequences, conserved genome organization.</title>
        <authorList>
            <person name="Philipp W."/>
            <person name="Honore N."/>
            <person name="Sapp M."/>
            <person name="Cole S.T."/>
            <person name="Streeck R.E."/>
        </authorList>
    </citation>
    <scope>NUCLEOTIDE SEQUENCE [GENOMIC DNA]</scope>
</reference>
<reference key="2">
    <citation type="journal article" date="2002" name="Rev. Med. Virol.">
        <title>Interactions of SV40 large T antigen and other viral proteins with retinoblastoma tumour suppressor.</title>
        <authorList>
            <person name="Lee C."/>
            <person name="Cho Y."/>
        </authorList>
    </citation>
    <scope>REVIEW</scope>
</reference>
<name>VE7_HPV42</name>
<comment type="function">
    <text evidence="1">Plays a role in viral genome replication by driving entry of quiescent cells into the cell cycle. Stimulation of progression from G1 to S phase allows the virus to efficiently use the cellular DNA replicating machinery to achieve viral genome replication. E7 protein has both transforming and trans-activating activities. Induces the disassembly of the E2F1 transcription factor from RB1, with subsequent transcriptional activation of E2F1-regulated S-phase genes. Interferes with host histone deacetylation mediated by HDAC1 and HDAC2, leading to transcription activation. Also plays a role in the inhibition of both antiviral and antiproliferative functions of host interferon alpha. Interaction with host TMEM173/STING impairs the ability of TMEM173/STING to sense cytosolic DNA and promote the production of type I interferon (IFN-alpha and IFN-beta).</text>
</comment>
<comment type="subunit">
    <text evidence="1">Homodimer. Homooligomer. Interacts with host RB1; this interaction induces dissociation of RB1-E2F1 complex thereby disrupting RB1 activity. Interacts with host EP300; this interaction represses EP300 transcriptional activity. Interacts with protein E2; this interaction inhibits E7 oncogenic activity. Interacts with host TMEM173/STING; this interaction impairs the ability of TMEM173/STING to sense cytosolic DNA and promote the production of type I interferon (IFN-alpha and IFN-beta).</text>
</comment>
<comment type="subcellular location">
    <subcellularLocation>
        <location evidence="1">Host cytoplasm</location>
    </subcellularLocation>
    <subcellularLocation>
        <location evidence="1">Host nucleus</location>
    </subcellularLocation>
    <text evidence="1">Predominantly found in the host nucleus.</text>
</comment>
<comment type="domain">
    <text evidence="1">The E7 terminal domain is an intrinsically disordered domain, whose flexibility and conformational transitions confer target adaptability to the oncoprotein. It allows adaptation to a variety of protein targets and exposes the PEST degradation sequence that regulates its turnover in the cell.</text>
</comment>
<comment type="PTM">
    <text evidence="1">Highly phosphorylated.</text>
</comment>
<comment type="similarity">
    <text evidence="1">Belongs to the papillomaviridae E7 protein family.</text>
</comment>
<comment type="sequence caution" evidence="2">
    <conflict type="erroneous initiation">
        <sequence resource="EMBL-CDS" id="AAA47042"/>
    </conflict>
</comment>
<evidence type="ECO:0000255" key="1">
    <source>
        <dbReference type="HAMAP-Rule" id="MF_04004"/>
    </source>
</evidence>
<evidence type="ECO:0000305" key="2"/>
<keyword id="KW-0010">Activator</keyword>
<keyword id="KW-0238">DNA-binding</keyword>
<keyword id="KW-0244">Early protein</keyword>
<keyword id="KW-1078">G1/S host cell cycle checkpoint dysregulation by virus</keyword>
<keyword id="KW-1035">Host cytoplasm</keyword>
<keyword id="KW-1048">Host nucleus</keyword>
<keyword id="KW-0945">Host-virus interaction</keyword>
<keyword id="KW-1090">Inhibition of host innate immune response by virus</keyword>
<keyword id="KW-1114">Inhibition of host interferon signaling pathway by virus</keyword>
<keyword id="KW-0922">Interferon antiviral system evasion</keyword>
<keyword id="KW-0479">Metal-binding</keyword>
<keyword id="KW-1121">Modulation of host cell cycle by virus</keyword>
<keyword id="KW-0553">Oncogene</keyword>
<keyword id="KW-0804">Transcription</keyword>
<keyword id="KW-0805">Transcription regulation</keyword>
<keyword id="KW-0899">Viral immunoevasion</keyword>
<keyword id="KW-0862">Zinc</keyword>
<keyword id="KW-0863">Zinc-finger</keyword>
<proteinExistence type="inferred from homology"/>
<organism>
    <name type="scientific">Human papillomavirus 42</name>
    <dbReference type="NCBI Taxonomy" id="10590"/>
    <lineage>
        <taxon>Viruses</taxon>
        <taxon>Monodnaviria</taxon>
        <taxon>Shotokuvirae</taxon>
        <taxon>Cossaviricota</taxon>
        <taxon>Papovaviricetes</taxon>
        <taxon>Zurhausenvirales</taxon>
        <taxon>Papillomaviridae</taxon>
        <taxon>Firstpapillomavirinae</taxon>
        <taxon>Alphapapillomavirus</taxon>
        <taxon>Alphapapillomavirus 1</taxon>
    </lineage>
</organism>
<organismHost>
    <name type="scientific">Homo sapiens</name>
    <name type="common">Human</name>
    <dbReference type="NCBI Taxonomy" id="9606"/>
</organismHost>
<gene>
    <name evidence="1" type="primary">E7</name>
</gene>
<protein>
    <recommendedName>
        <fullName evidence="1">Protein E7</fullName>
    </recommendedName>
</protein>
<feature type="chain" id="PRO_0000133440" description="Protein E7">
    <location>
        <begin position="1"/>
        <end position="93"/>
    </location>
</feature>
<feature type="zinc finger region" evidence="1">
    <location>
        <begin position="53"/>
        <end position="89"/>
    </location>
</feature>
<feature type="region of interest" description="E7 terminal domain" evidence="1">
    <location>
        <begin position="1"/>
        <end position="42"/>
    </location>
</feature>
<feature type="short sequence motif" description="LXCXE motif; interaction with host RB1 and TMEM173/STING" evidence="1">
    <location>
        <begin position="25"/>
        <end position="29"/>
    </location>
</feature>
<feature type="short sequence motif" description="Nuclear export signal" evidence="1">
    <location>
        <begin position="71"/>
        <end position="79"/>
    </location>
</feature>
<accession>P27231</accession>
<sequence length="93" mass="10679">MRGETPTLKDIVLFDIPTCETPIDLYCYEQLDSSDEDDQAKQDIQRYRILCVCTQCYKSVKLVVQCTEADIRNLQQMLLGTLDIVCPLCARVE</sequence>
<dbReference type="EMBL" id="M73236">
    <property type="protein sequence ID" value="AAA47042.1"/>
    <property type="status" value="ALT_INIT"/>
    <property type="molecule type" value="Genomic_DNA"/>
</dbReference>
<dbReference type="PIR" id="F39451">
    <property type="entry name" value="W7WL42"/>
</dbReference>
<dbReference type="SMR" id="P27231"/>
<dbReference type="Proteomes" id="UP000009122">
    <property type="component" value="Genome"/>
</dbReference>
<dbReference type="GO" id="GO:0030430">
    <property type="term" value="C:host cell cytoplasm"/>
    <property type="evidence" value="ECO:0007669"/>
    <property type="project" value="UniProtKB-SubCell"/>
</dbReference>
<dbReference type="GO" id="GO:0042025">
    <property type="term" value="C:host cell nucleus"/>
    <property type="evidence" value="ECO:0007669"/>
    <property type="project" value="UniProtKB-SubCell"/>
</dbReference>
<dbReference type="GO" id="GO:0003677">
    <property type="term" value="F:DNA binding"/>
    <property type="evidence" value="ECO:0007669"/>
    <property type="project" value="UniProtKB-UniRule"/>
</dbReference>
<dbReference type="GO" id="GO:0003700">
    <property type="term" value="F:DNA-binding transcription factor activity"/>
    <property type="evidence" value="ECO:0007669"/>
    <property type="project" value="UniProtKB-UniRule"/>
</dbReference>
<dbReference type="GO" id="GO:0019904">
    <property type="term" value="F:protein domain specific binding"/>
    <property type="evidence" value="ECO:0007669"/>
    <property type="project" value="UniProtKB-UniRule"/>
</dbReference>
<dbReference type="GO" id="GO:0008270">
    <property type="term" value="F:zinc ion binding"/>
    <property type="evidence" value="ECO:0007669"/>
    <property type="project" value="UniProtKB-KW"/>
</dbReference>
<dbReference type="GO" id="GO:0006351">
    <property type="term" value="P:DNA-templated transcription"/>
    <property type="evidence" value="ECO:0007669"/>
    <property type="project" value="UniProtKB-UniRule"/>
</dbReference>
<dbReference type="GO" id="GO:0039645">
    <property type="term" value="P:symbiont-mediated perturbation of host cell cycle G1/S transition checkpoint"/>
    <property type="evidence" value="ECO:0007669"/>
    <property type="project" value="UniProtKB-UniRule"/>
</dbReference>
<dbReference type="GO" id="GO:0052170">
    <property type="term" value="P:symbiont-mediated suppression of host innate immune response"/>
    <property type="evidence" value="ECO:0007669"/>
    <property type="project" value="UniProtKB-KW"/>
</dbReference>
<dbReference type="GO" id="GO:0039502">
    <property type="term" value="P:symbiont-mediated suppression of host type I interferon-mediated signaling pathway"/>
    <property type="evidence" value="ECO:0007669"/>
    <property type="project" value="UniProtKB-UniRule"/>
</dbReference>
<dbReference type="Gene3D" id="3.30.160.330">
    <property type="match status" value="1"/>
</dbReference>
<dbReference type="HAMAP" id="MF_04004">
    <property type="entry name" value="PPV_E7"/>
    <property type="match status" value="1"/>
</dbReference>
<dbReference type="InterPro" id="IPR000148">
    <property type="entry name" value="Papilloma_E7"/>
</dbReference>
<dbReference type="Pfam" id="PF00527">
    <property type="entry name" value="E7"/>
    <property type="match status" value="1"/>
</dbReference>
<dbReference type="PIRSF" id="PIRSF003407">
    <property type="entry name" value="Papvi_E7"/>
    <property type="match status" value="1"/>
</dbReference>
<dbReference type="SUPFAM" id="SSF161234">
    <property type="entry name" value="E7 C-terminal domain-like"/>
    <property type="match status" value="1"/>
</dbReference>